<dbReference type="EMBL" id="AL590842">
    <property type="protein sequence ID" value="CAL19350.1"/>
    <property type="molecule type" value="Genomic_DNA"/>
</dbReference>
<dbReference type="EMBL" id="AE009952">
    <property type="protein sequence ID" value="AAM87052.1"/>
    <property type="molecule type" value="Genomic_DNA"/>
</dbReference>
<dbReference type="EMBL" id="AE017042">
    <property type="protein sequence ID" value="AAS63168.1"/>
    <property type="molecule type" value="Genomic_DNA"/>
</dbReference>
<dbReference type="PIR" id="AD0083">
    <property type="entry name" value="AD0083"/>
</dbReference>
<dbReference type="RefSeq" id="WP_002212176.1">
    <property type="nucleotide sequence ID" value="NZ_WUCM01000053.1"/>
</dbReference>
<dbReference type="RefSeq" id="YP_002345741.1">
    <property type="nucleotide sequence ID" value="NC_003143.1"/>
</dbReference>
<dbReference type="SMR" id="Q7CGI0"/>
<dbReference type="IntAct" id="Q7CGI0">
    <property type="interactions" value="10"/>
</dbReference>
<dbReference type="STRING" id="214092.YPO0673"/>
<dbReference type="PaxDb" id="214092-YPO0673"/>
<dbReference type="DNASU" id="1148451"/>
<dbReference type="EnsemblBacteria" id="AAS63168">
    <property type="protein sequence ID" value="AAS63168"/>
    <property type="gene ID" value="YP_2989"/>
</dbReference>
<dbReference type="GeneID" id="49784626"/>
<dbReference type="KEGG" id="ype:YPO0673"/>
<dbReference type="KEGG" id="ypk:y3504"/>
<dbReference type="KEGG" id="ypm:YP_2989"/>
<dbReference type="PATRIC" id="fig|214092.21.peg.934"/>
<dbReference type="eggNOG" id="COG2132">
    <property type="taxonomic scope" value="Bacteria"/>
</dbReference>
<dbReference type="HOGENOM" id="CLU_009100_2_4_6"/>
<dbReference type="OMA" id="GMWIIED"/>
<dbReference type="OrthoDB" id="9757546at2"/>
<dbReference type="Proteomes" id="UP000000815">
    <property type="component" value="Chromosome"/>
</dbReference>
<dbReference type="Proteomes" id="UP000001019">
    <property type="component" value="Chromosome"/>
</dbReference>
<dbReference type="Proteomes" id="UP000002490">
    <property type="component" value="Chromosome"/>
</dbReference>
<dbReference type="GO" id="GO:0032153">
    <property type="term" value="C:cell division site"/>
    <property type="evidence" value="ECO:0007669"/>
    <property type="project" value="UniProtKB-UniRule"/>
</dbReference>
<dbReference type="GO" id="GO:0030288">
    <property type="term" value="C:outer membrane-bounded periplasmic space"/>
    <property type="evidence" value="ECO:0000318"/>
    <property type="project" value="GO_Central"/>
</dbReference>
<dbReference type="GO" id="GO:0005507">
    <property type="term" value="F:copper ion binding"/>
    <property type="evidence" value="ECO:0007669"/>
    <property type="project" value="InterPro"/>
</dbReference>
<dbReference type="GO" id="GO:0016491">
    <property type="term" value="F:oxidoreductase activity"/>
    <property type="evidence" value="ECO:0000318"/>
    <property type="project" value="GO_Central"/>
</dbReference>
<dbReference type="GO" id="GO:0043093">
    <property type="term" value="P:FtsZ-dependent cytokinesis"/>
    <property type="evidence" value="ECO:0007669"/>
    <property type="project" value="UniProtKB-UniRule"/>
</dbReference>
<dbReference type="CDD" id="cd13867">
    <property type="entry name" value="CuRO_2_CueO_FtsP"/>
    <property type="match status" value="1"/>
</dbReference>
<dbReference type="CDD" id="cd13890">
    <property type="entry name" value="CuRO_3_CueO_FtsP"/>
    <property type="match status" value="1"/>
</dbReference>
<dbReference type="Gene3D" id="2.60.40.420">
    <property type="entry name" value="Cupredoxins - blue copper proteins"/>
    <property type="match status" value="3"/>
</dbReference>
<dbReference type="HAMAP" id="MF_00915">
    <property type="entry name" value="FtsP"/>
    <property type="match status" value="1"/>
</dbReference>
<dbReference type="InterPro" id="IPR011707">
    <property type="entry name" value="Cu-oxidase-like_N"/>
</dbReference>
<dbReference type="InterPro" id="IPR011706">
    <property type="entry name" value="Cu-oxidase_C"/>
</dbReference>
<dbReference type="InterPro" id="IPR045087">
    <property type="entry name" value="Cu-oxidase_fam"/>
</dbReference>
<dbReference type="InterPro" id="IPR008972">
    <property type="entry name" value="Cupredoxin"/>
</dbReference>
<dbReference type="InterPro" id="IPR026589">
    <property type="entry name" value="FtsP"/>
</dbReference>
<dbReference type="InterPro" id="IPR006311">
    <property type="entry name" value="TAT_signal"/>
</dbReference>
<dbReference type="NCBIfam" id="NF008135">
    <property type="entry name" value="PRK10883.1"/>
    <property type="match status" value="1"/>
</dbReference>
<dbReference type="PANTHER" id="PTHR48267:SF1">
    <property type="entry name" value="BILIRUBIN OXIDASE"/>
    <property type="match status" value="1"/>
</dbReference>
<dbReference type="PANTHER" id="PTHR48267">
    <property type="entry name" value="CUPREDOXIN SUPERFAMILY PROTEIN"/>
    <property type="match status" value="1"/>
</dbReference>
<dbReference type="Pfam" id="PF07731">
    <property type="entry name" value="Cu-oxidase_2"/>
    <property type="match status" value="1"/>
</dbReference>
<dbReference type="Pfam" id="PF07732">
    <property type="entry name" value="Cu-oxidase_3"/>
    <property type="match status" value="1"/>
</dbReference>
<dbReference type="SUPFAM" id="SSF49503">
    <property type="entry name" value="Cupredoxins"/>
    <property type="match status" value="3"/>
</dbReference>
<dbReference type="PROSITE" id="PS51318">
    <property type="entry name" value="TAT"/>
    <property type="match status" value="1"/>
</dbReference>
<reference key="1">
    <citation type="journal article" date="2001" name="Nature">
        <title>Genome sequence of Yersinia pestis, the causative agent of plague.</title>
        <authorList>
            <person name="Parkhill J."/>
            <person name="Wren B.W."/>
            <person name="Thomson N.R."/>
            <person name="Titball R.W."/>
            <person name="Holden M.T.G."/>
            <person name="Prentice M.B."/>
            <person name="Sebaihia M."/>
            <person name="James K.D."/>
            <person name="Churcher C.M."/>
            <person name="Mungall K.L."/>
            <person name="Baker S."/>
            <person name="Basham D."/>
            <person name="Bentley S.D."/>
            <person name="Brooks K."/>
            <person name="Cerdeno-Tarraga A.-M."/>
            <person name="Chillingworth T."/>
            <person name="Cronin A."/>
            <person name="Davies R.M."/>
            <person name="Davis P."/>
            <person name="Dougan G."/>
            <person name="Feltwell T."/>
            <person name="Hamlin N."/>
            <person name="Holroyd S."/>
            <person name="Jagels K."/>
            <person name="Karlyshev A.V."/>
            <person name="Leather S."/>
            <person name="Moule S."/>
            <person name="Oyston P.C.F."/>
            <person name="Quail M.A."/>
            <person name="Rutherford K.M."/>
            <person name="Simmonds M."/>
            <person name="Skelton J."/>
            <person name="Stevens K."/>
            <person name="Whitehead S."/>
            <person name="Barrell B.G."/>
        </authorList>
    </citation>
    <scope>NUCLEOTIDE SEQUENCE [LARGE SCALE GENOMIC DNA]</scope>
    <source>
        <strain>CO-92 / Biovar Orientalis</strain>
    </source>
</reference>
<reference key="2">
    <citation type="journal article" date="2002" name="J. Bacteriol.">
        <title>Genome sequence of Yersinia pestis KIM.</title>
        <authorList>
            <person name="Deng W."/>
            <person name="Burland V."/>
            <person name="Plunkett G. III"/>
            <person name="Boutin A."/>
            <person name="Mayhew G.F."/>
            <person name="Liss P."/>
            <person name="Perna N.T."/>
            <person name="Rose D.J."/>
            <person name="Mau B."/>
            <person name="Zhou S."/>
            <person name="Schwartz D.C."/>
            <person name="Fetherston J.D."/>
            <person name="Lindler L.E."/>
            <person name="Brubaker R.R."/>
            <person name="Plano G.V."/>
            <person name="Straley S.C."/>
            <person name="McDonough K.A."/>
            <person name="Nilles M.L."/>
            <person name="Matson J.S."/>
            <person name="Blattner F.R."/>
            <person name="Perry R.D."/>
        </authorList>
    </citation>
    <scope>NUCLEOTIDE SEQUENCE [LARGE SCALE GENOMIC DNA]</scope>
    <source>
        <strain>KIM10+ / Biovar Mediaevalis</strain>
    </source>
</reference>
<reference key="3">
    <citation type="journal article" date="2004" name="DNA Res.">
        <title>Complete genome sequence of Yersinia pestis strain 91001, an isolate avirulent to humans.</title>
        <authorList>
            <person name="Song Y."/>
            <person name="Tong Z."/>
            <person name="Wang J."/>
            <person name="Wang L."/>
            <person name="Guo Z."/>
            <person name="Han Y."/>
            <person name="Zhang J."/>
            <person name="Pei D."/>
            <person name="Zhou D."/>
            <person name="Qin H."/>
            <person name="Pang X."/>
            <person name="Han Y."/>
            <person name="Zhai J."/>
            <person name="Li M."/>
            <person name="Cui B."/>
            <person name="Qi Z."/>
            <person name="Jin L."/>
            <person name="Dai R."/>
            <person name="Chen F."/>
            <person name="Li S."/>
            <person name="Ye C."/>
            <person name="Du Z."/>
            <person name="Lin W."/>
            <person name="Wang J."/>
            <person name="Yu J."/>
            <person name="Yang H."/>
            <person name="Wang J."/>
            <person name="Huang P."/>
            <person name="Yang R."/>
        </authorList>
    </citation>
    <scope>NUCLEOTIDE SEQUENCE [LARGE SCALE GENOMIC DNA]</scope>
    <source>
        <strain>91001 / Biovar Mediaevalis</strain>
    </source>
</reference>
<comment type="function">
    <text evidence="1">Cell division protein that is required for growth during stress conditions. May be involved in protecting or stabilizing the divisomal assembly under conditions of stress.</text>
</comment>
<comment type="subcellular location">
    <subcellularLocation>
        <location evidence="1">Periplasm</location>
    </subcellularLocation>
    <text evidence="1">Localizes to the division septum.</text>
</comment>
<comment type="PTM">
    <text>Predicted to be exported by the Tat system. The position of the signal peptide cleavage has not been experimentally proven.</text>
</comment>
<comment type="similarity">
    <text evidence="1">Belongs to the FtsP family.</text>
</comment>
<proteinExistence type="inferred from homology"/>
<keyword id="KW-0131">Cell cycle</keyword>
<keyword id="KW-0132">Cell division</keyword>
<keyword id="KW-0574">Periplasm</keyword>
<keyword id="KW-1185">Reference proteome</keyword>
<keyword id="KW-0732">Signal</keyword>
<protein>
    <recommendedName>
        <fullName evidence="1">Cell division protein FtsP</fullName>
    </recommendedName>
</protein>
<name>FTSP_YERPE</name>
<sequence>MSLSRRQFIQAAGLALGAGSLPLRAQASSTQQPQLPVPPLLESRRGQPLFLTLQRAHWAFSGNKKAAVWGINGMYLGPTVRVFNGDDVKLIYSNRLTEPVSMTISGLQVPGTLMGGEARMIRPGEDWSPVLPVRQPAANCWYHANTPNRMAPHVYNGLAGMWLVEDAVSKAMPLPSHYGVDDFPLIIQDKRLDNFGVPEYNPPAKGGFVGDTLLVNGAQSPFVEVSRGWVRLRLLNASNARRYTLQLSDGRPLYVVASDQGFLPAPVAVQQLSLAPGERREVVIDMSQGNEVSITAGESAGIMDRLRGLFEPSSILISTLVLTLKPTGLLPLVTDNLPMRLLADQIIEGSVIRSREFQLGDNLPGINGAIWDMNRVDVQAQQGTWERWIIHADMPQAFHIQGVSFLVKSVNGAAAMAEDRGWKDTVWVDGTVELWVYFNQVSSPQFPFLFYSQTLEMADRGSAGQLVTVAAPTL</sequence>
<accession>Q7CGI0</accession>
<accession>Q74RN4</accession>
<gene>
    <name evidence="1" type="primary">ftsP</name>
    <name type="ordered locus">YPO0673</name>
    <name type="ordered locus">y3504</name>
    <name type="ordered locus">YP_2989</name>
</gene>
<evidence type="ECO:0000255" key="1">
    <source>
        <dbReference type="HAMAP-Rule" id="MF_00915"/>
    </source>
</evidence>
<evidence type="ECO:0000305" key="2"/>
<organism>
    <name type="scientific">Yersinia pestis</name>
    <dbReference type="NCBI Taxonomy" id="632"/>
    <lineage>
        <taxon>Bacteria</taxon>
        <taxon>Pseudomonadati</taxon>
        <taxon>Pseudomonadota</taxon>
        <taxon>Gammaproteobacteria</taxon>
        <taxon>Enterobacterales</taxon>
        <taxon>Yersiniaceae</taxon>
        <taxon>Yersinia</taxon>
    </lineage>
</organism>
<feature type="signal peptide" description="Tat-type signal" evidence="1">
    <location>
        <begin position="1"/>
        <end position="27"/>
    </location>
</feature>
<feature type="chain" id="PRO_0000416017" description="Cell division protein FtsP">
    <location>
        <begin position="28"/>
        <end position="474"/>
    </location>
</feature>
<feature type="domain" description="Plastocyanin-like" evidence="1">
    <location>
        <begin position="229"/>
        <end position="288"/>
    </location>
</feature>
<feature type="sequence conflict" description="In Ref. 3; AAS63168." evidence="2" ref="3">
    <original>F</original>
    <variation>V</variation>
    <location>
        <position position="208"/>
    </location>
</feature>